<evidence type="ECO:0000250" key="1"/>
<evidence type="ECO:0000255" key="2"/>
<evidence type="ECO:0000256" key="3">
    <source>
        <dbReference type="SAM" id="MobiDB-lite"/>
    </source>
</evidence>
<keyword id="KW-0165">Cleavage on pair of basic residues</keyword>
<keyword id="KW-0175">Coiled coil</keyword>
<keyword id="KW-1015">Disulfide bond</keyword>
<keyword id="KW-1169">Fusion of virus membrane with host cell membrane</keyword>
<keyword id="KW-1168">Fusion of virus membrane with host membrane</keyword>
<keyword id="KW-0325">Glycoprotein</keyword>
<keyword id="KW-1032">Host cell membrane</keyword>
<keyword id="KW-1043">Host membrane</keyword>
<keyword id="KW-0945">Host-virus interaction</keyword>
<keyword id="KW-0449">Lipoprotein</keyword>
<keyword id="KW-0472">Membrane</keyword>
<keyword id="KW-0479">Metal-binding</keyword>
<keyword id="KW-0564">Palmitate</keyword>
<keyword id="KW-0732">Signal</keyword>
<keyword id="KW-0812">Transmembrane</keyword>
<keyword id="KW-1133">Transmembrane helix</keyword>
<keyword id="KW-1161">Viral attachment to host cell</keyword>
<keyword id="KW-0261">Viral envelope protein</keyword>
<keyword id="KW-1162">Viral penetration into host cytoplasm</keyword>
<keyword id="KW-0946">Virion</keyword>
<keyword id="KW-1160">Virus entry into host cell</keyword>
<keyword id="KW-0862">Zinc</keyword>
<name>ENV_MLVHO</name>
<accession>P21436</accession>
<comment type="function">
    <text evidence="1">The surface protein (SU) attaches the virus to the host cell by binding to its receptor. This interaction triggers the refolding of the transmembrane protein (TM) and is thought to activate its fusogenic potential by unmasking its fusion peptide. Fusion occurs at the host cell plasma membrane (By similarity).</text>
</comment>
<comment type="function">
    <text evidence="1">The transmembrane protein (TM) acts as a class I viral fusion protein. Under the current model, the protein has at least 3 conformational states: pre-fusion native state, pre-hairpin intermediate state, and post-fusion hairpin state. During viral and target cell membrane fusion, the coiled coil regions (heptad repeats) assume a trimer-of-hairpins structure, positioning the fusion peptide in close proximity to the C-terminal region of the ectodomain. The formation of this structure appears to drive apposition and subsequent fusion of viral and target cell membranes. Membranes fusion leads to delivery of the nucleocapsid into the cytoplasm (By similarity).</text>
</comment>
<comment type="subunit">
    <text evidence="1">The mature envelope protein (Env) consists of a trimer of SU-TM heterodimers attached by a labile interchain disulfide bond.</text>
</comment>
<comment type="subcellular location">
    <molecule>Transmembrane protein</molecule>
    <subcellularLocation>
        <location evidence="1">Virion membrane</location>
        <topology evidence="1">Single-pass type I membrane protein</topology>
    </subcellularLocation>
    <subcellularLocation>
        <location evidence="1">Host cell membrane</location>
        <topology evidence="1">Single-pass type I membrane protein</topology>
    </subcellularLocation>
</comment>
<comment type="subcellular location">
    <molecule>Surface protein</molecule>
    <subcellularLocation>
        <location>Virion membrane</location>
        <topology>Peripheral membrane protein</topology>
    </subcellularLocation>
    <subcellularLocation>
        <location evidence="1">Host cell membrane</location>
        <topology evidence="1">Peripheral membrane protein</topology>
    </subcellularLocation>
    <text evidence="1">The surface protein is not anchored to the viral envelope, but associates with the virion surface through its binding to TM. Both proteins are thought to be concentrated at the site of budding and incorporated into the virions possibly by contacts between the cytoplasmic tail of Env and the N-terminus of Gag (By similarity).</text>
</comment>
<comment type="subcellular location">
    <molecule>R-peptide</molecule>
    <subcellularLocation>
        <location evidence="1">Host cell membrane</location>
        <topology evidence="1">Peripheral membrane protein</topology>
    </subcellularLocation>
    <text evidence="1">The R-peptide is membrane-associated through its palmitate.</text>
</comment>
<comment type="domain">
    <text>The YXXL motif is involved in determining the exact site of viral release at the surface of infected mononuclear cells and promotes endocytosis.</text>
</comment>
<comment type="domain">
    <text evidence="1">The 17 amino acids long immunosuppressive region is present in many retroviral envelope proteins. Synthetic peptides derived from this relatively conserved sequence inhibit immune function in vitro and in vivo (By similarity).</text>
</comment>
<comment type="PTM">
    <text evidence="1">Specific enzymatic cleavages in vivo yield mature proteins. Envelope glycoproteins are synthesized as an inactive precursor that is N-glycosylated and processed likely by host cell furin or by a furin-like protease in the Golgi to yield the mature SU and TM proteins. The cleavage site between SU and TM requires the minimal sequence [KR]-X-[KR]-R. The R-peptide is released from the C-terminus of the cytoplasmic tail of the TM protein upon particle formation as a result of proteolytic cleavage by the viral protease. Cleavage of this peptide is required for TM to become fusogenic (By similarity).</text>
</comment>
<comment type="PTM">
    <text evidence="1">The CXXC motif is highly conserved across a broad range of retroviral envelope proteins. It is thought to participate in the formation of a labile disulfide bond possibly with the CX6CC motif present in the transmembrane protein. Isomerization of the intersubunit disulfide bond to an SU intrachain disulfide bond is thought to occur upon receptor recognition in order to allow membrane fusion (By similarity).</text>
</comment>
<comment type="PTM">
    <text evidence="1">The transmembrane protein is palmitoylated.</text>
</comment>
<comment type="PTM">
    <text evidence="1">The R-peptide is palmitoylated.</text>
</comment>
<organism>
    <name type="scientific">Hortulanus murine leukemia virus</name>
    <name type="common">HoMuLV</name>
    <name type="synonym">Mus hortulanus virus</name>
    <dbReference type="NCBI Taxonomy" id="11799"/>
    <lineage>
        <taxon>Viruses</taxon>
        <taxon>Riboviria</taxon>
        <taxon>Pararnavirae</taxon>
        <taxon>Artverviricota</taxon>
        <taxon>Revtraviricetes</taxon>
        <taxon>Ortervirales</taxon>
        <taxon>Retroviridae</taxon>
        <taxon>Orthoretrovirinae</taxon>
        <taxon>Gammaretrovirus</taxon>
        <taxon>Murine leukemia virus</taxon>
    </lineage>
</organism>
<organismHost>
    <name type="scientific">Mus musculus</name>
    <name type="common">Mouse</name>
    <dbReference type="NCBI Taxonomy" id="10090"/>
</organismHost>
<dbReference type="EMBL" id="M26527">
    <property type="status" value="NOT_ANNOTATED_CDS"/>
    <property type="molecule type" value="Genomic_RNA"/>
</dbReference>
<dbReference type="PIR" id="B32594">
    <property type="entry name" value="VCMVHL"/>
</dbReference>
<dbReference type="SMR" id="P21436"/>
<dbReference type="GlyCosmos" id="P21436">
    <property type="glycosylation" value="7 sites, No reported glycans"/>
</dbReference>
<dbReference type="GO" id="GO:0020002">
    <property type="term" value="C:host cell plasma membrane"/>
    <property type="evidence" value="ECO:0007669"/>
    <property type="project" value="UniProtKB-SubCell"/>
</dbReference>
<dbReference type="GO" id="GO:0016020">
    <property type="term" value="C:membrane"/>
    <property type="evidence" value="ECO:0007669"/>
    <property type="project" value="UniProtKB-KW"/>
</dbReference>
<dbReference type="GO" id="GO:0019031">
    <property type="term" value="C:viral envelope"/>
    <property type="evidence" value="ECO:0007669"/>
    <property type="project" value="UniProtKB-KW"/>
</dbReference>
<dbReference type="GO" id="GO:0055036">
    <property type="term" value="C:virion membrane"/>
    <property type="evidence" value="ECO:0007669"/>
    <property type="project" value="UniProtKB-SubCell"/>
</dbReference>
<dbReference type="GO" id="GO:0046872">
    <property type="term" value="F:metal ion binding"/>
    <property type="evidence" value="ECO:0007669"/>
    <property type="project" value="UniProtKB-KW"/>
</dbReference>
<dbReference type="GO" id="GO:0019064">
    <property type="term" value="P:fusion of virus membrane with host plasma membrane"/>
    <property type="evidence" value="ECO:0007669"/>
    <property type="project" value="UniProtKB-KW"/>
</dbReference>
<dbReference type="GO" id="GO:0046718">
    <property type="term" value="P:symbiont entry into host cell"/>
    <property type="evidence" value="ECO:0007669"/>
    <property type="project" value="UniProtKB-KW"/>
</dbReference>
<dbReference type="GO" id="GO:0019062">
    <property type="term" value="P:virion attachment to host cell"/>
    <property type="evidence" value="ECO:0007669"/>
    <property type="project" value="UniProtKB-KW"/>
</dbReference>
<dbReference type="CDD" id="cd09851">
    <property type="entry name" value="HTLV-1-like_HR1-HR2"/>
    <property type="match status" value="1"/>
</dbReference>
<dbReference type="Gene3D" id="1.10.287.210">
    <property type="match status" value="1"/>
</dbReference>
<dbReference type="Gene3D" id="3.90.310.10">
    <property type="entry name" value="ENV polyprotein, receptor-binding domain"/>
    <property type="match status" value="1"/>
</dbReference>
<dbReference type="InterPro" id="IPR008981">
    <property type="entry name" value="FMuLV_rcpt-bd"/>
</dbReference>
<dbReference type="InterPro" id="IPR018154">
    <property type="entry name" value="TLV/ENV_coat_polyprotein"/>
</dbReference>
<dbReference type="PANTHER" id="PTHR10424:SF72">
    <property type="entry name" value="BC035947 PROTEIN-RELATED"/>
    <property type="match status" value="1"/>
</dbReference>
<dbReference type="PANTHER" id="PTHR10424">
    <property type="entry name" value="VIRAL ENVELOPE PROTEIN"/>
    <property type="match status" value="1"/>
</dbReference>
<dbReference type="Pfam" id="PF00429">
    <property type="entry name" value="TLV_coat"/>
    <property type="match status" value="1"/>
</dbReference>
<dbReference type="SUPFAM" id="SSF49830">
    <property type="entry name" value="ENV polyprotein, receptor-binding domain"/>
    <property type="match status" value="1"/>
</dbReference>
<dbReference type="SUPFAM" id="SSF58069">
    <property type="entry name" value="Virus ectodomain"/>
    <property type="match status" value="1"/>
</dbReference>
<reference key="1">
    <citation type="journal article" date="1989" name="Virology">
        <title>Nucleotide sequence and mode of transmission of the wild mouse ecotropic virus, HoMuLV.</title>
        <authorList>
            <person name="Voytek P."/>
            <person name="Kozak C.A."/>
        </authorList>
    </citation>
    <scope>NUCLEOTIDE SEQUENCE [GENOMIC RNA]</scope>
</reference>
<sequence length="666" mass="73035">MDRPALPKSIKDKTNPWGPIILGILIMLGGALGKGSPHKVFNLTWEVYNQEYETVWATSGSHPLWTWWPTLTPDLCMLAQLAKPSWGLSDYPPYSKPPGPPCCTTDNNPPGCSRDCNGPLTYLTPRCSTAWNRLKLVLTTHHLNQGFYVCPGPHRPRHARNCGGPDDFYCAHWGCETTGQAYWKPSSSWDYIRVSNNASSSDATTACKNNNWCSPLAISFTDPGKRATSWTSGFTWGLRLYISGHPGLIFGVRLKISDLGPRVPIGPNPVLSEQRPPSQPEPARLPPSSNLTQGGTPSAPTGPPQEGTGDRLLDLVQGAYQALNATSPDKTQECWLCLVSSPPYYEGVAVVGPYSNHTTAPANCSADSQHKLTLSEVTGKPLPRKGSQDPPGPVQYHSGARQKYSLSGGSRGTMWACNTGLTPCLSTAVLNLTTDYCVLVELWPRVTYHSLDFVYRQVEGRTRYQREPVSLTLALLLGGLTMGGIAAGVGTGTSALVKTQQFEQLHAAIQADLKEVESSITNLEKSLTSLSEVVLQNRRGLDLLFLEKGGLCAALKEECCFYADHTGLVRDSMAKLRERLNQRQKLFEAGQGWFEGLFNRSPWLTTLISTIMGPLIILLLILMFGPCILNRLVQFVKDRISVVQALVLTQQYHQLKPLEHGRAIVK</sequence>
<feature type="signal peptide" evidence="2">
    <location>
        <begin position="1"/>
        <end position="33"/>
    </location>
</feature>
<feature type="chain" id="PRO_0000239585" description="Envelope glycoprotein">
    <location>
        <begin position="34"/>
        <end position="666"/>
    </location>
</feature>
<feature type="chain" id="PRO_0000040760" description="Surface protein" evidence="1">
    <location>
        <begin position="34"/>
        <end position="466"/>
    </location>
</feature>
<feature type="chain" id="PRO_0000040761" description="Transmembrane protein" evidence="1">
    <location>
        <begin position="467"/>
        <end position="646"/>
    </location>
</feature>
<feature type="peptide" id="PRO_0000239586" description="R-peptide" evidence="1">
    <location>
        <begin position="647"/>
        <end position="666"/>
    </location>
</feature>
<feature type="topological domain" description="Extracellular" evidence="2">
    <location>
        <begin position="34"/>
        <end position="607"/>
    </location>
</feature>
<feature type="transmembrane region" description="Helical" evidence="2">
    <location>
        <begin position="608"/>
        <end position="628"/>
    </location>
</feature>
<feature type="topological domain" description="Cytoplasmic" evidence="2">
    <location>
        <begin position="629"/>
        <end position="666"/>
    </location>
</feature>
<feature type="region of interest" description="Receptor-binding domain (RBD)" evidence="2">
    <location>
        <begin position="31"/>
        <end position="264"/>
    </location>
</feature>
<feature type="region of interest" description="Disordered" evidence="3">
    <location>
        <begin position="265"/>
        <end position="310"/>
    </location>
</feature>
<feature type="region of interest" description="Disordered" evidence="3">
    <location>
        <begin position="378"/>
        <end position="399"/>
    </location>
</feature>
<feature type="region of interest" description="Fusion peptide" evidence="1">
    <location>
        <begin position="469"/>
        <end position="489"/>
    </location>
</feature>
<feature type="region of interest" description="Immunosuppression" evidence="1">
    <location>
        <begin position="535"/>
        <end position="551"/>
    </location>
</feature>
<feature type="coiled-coil region" evidence="2">
    <location>
        <begin position="500"/>
        <end position="534"/>
    </location>
</feature>
<feature type="short sequence motif" description="CXXC">
    <location>
        <begin position="334"/>
        <end position="337"/>
    </location>
</feature>
<feature type="short sequence motif" description="CX6CC">
    <location>
        <begin position="552"/>
        <end position="560"/>
    </location>
</feature>
<feature type="short sequence motif" description="YXXL motif; contains endocytosis signal" evidence="1">
    <location>
        <begin position="652"/>
        <end position="655"/>
    </location>
</feature>
<feature type="compositionally biased region" description="Polar residues" evidence="3">
    <location>
        <begin position="287"/>
        <end position="299"/>
    </location>
</feature>
<feature type="binding site" evidence="1">
    <location>
        <position position="115"/>
    </location>
    <ligand>
        <name>Zn(2+)</name>
        <dbReference type="ChEBI" id="CHEBI:29105"/>
    </ligand>
</feature>
<feature type="site" description="Cleavage; by host" evidence="1">
    <location>
        <begin position="466"/>
        <end position="467"/>
    </location>
</feature>
<feature type="site" description="Cleavage; by viral protease p14" evidence="1">
    <location>
        <begin position="646"/>
        <end position="647"/>
    </location>
</feature>
<feature type="lipid moiety-binding region" description="S-palmitoyl cysteine; by host" evidence="1">
    <location>
        <position position="627"/>
    </location>
</feature>
<feature type="glycosylation site" description="N-linked (GlcNAc...) asparagine; by host" evidence="1">
    <location>
        <position position="42"/>
    </location>
</feature>
<feature type="glycosylation site" description="N-linked (GlcNAc...) asparagine; by host" evidence="2">
    <location>
        <position position="197"/>
    </location>
</feature>
<feature type="glycosylation site" description="N-linked (GlcNAc...) asparagine; by host" evidence="2">
    <location>
        <position position="290"/>
    </location>
</feature>
<feature type="glycosylation site" description="N-linked (GlcNAc...) asparagine; by host" evidence="1">
    <location>
        <position position="324"/>
    </location>
</feature>
<feature type="glycosylation site" description="N-linked (GlcNAc...) asparagine; by host" evidence="2">
    <location>
        <position position="356"/>
    </location>
</feature>
<feature type="glycosylation site" description="N-linked (GlcNAc...) asparagine; by host" evidence="2">
    <location>
        <position position="363"/>
    </location>
</feature>
<feature type="glycosylation site" description="N-linked (GlcNAc...) asparagine; by host" evidence="2">
    <location>
        <position position="431"/>
    </location>
</feature>
<feature type="disulfide bond" evidence="1">
    <location>
        <begin position="76"/>
        <end position="127"/>
    </location>
</feature>
<feature type="disulfide bond" evidence="1">
    <location>
        <begin position="102"/>
        <end position="116"/>
    </location>
</feature>
<feature type="disulfide bond" evidence="1">
    <location>
        <begin position="103"/>
        <end position="112"/>
    </location>
</feature>
<feature type="disulfide bond" evidence="1">
    <location>
        <begin position="150"/>
        <end position="170"/>
    </location>
</feature>
<feature type="disulfide bond" evidence="1">
    <location>
        <begin position="162"/>
        <end position="175"/>
    </location>
</feature>
<feature type="disulfide bond" evidence="1">
    <location>
        <begin position="207"/>
        <end position="213"/>
    </location>
</feature>
<feature type="disulfide bond" description="Interchain (between SU and TM chains, or C-337 with C-560); in linked form">
    <location>
        <begin position="334"/>
        <end position="560"/>
    </location>
</feature>
<feature type="disulfide bond">
    <location>
        <begin position="334"/>
        <end position="337"/>
    </location>
</feature>
<feature type="disulfide bond" evidence="1">
    <location>
        <begin position="364"/>
        <end position="417"/>
    </location>
</feature>
<feature type="disulfide bond" evidence="1">
    <location>
        <begin position="424"/>
        <end position="437"/>
    </location>
</feature>
<feature type="disulfide bond" evidence="1">
    <location>
        <begin position="552"/>
        <end position="560"/>
    </location>
</feature>
<proteinExistence type="evidence at protein level"/>
<protein>
    <recommendedName>
        <fullName>Envelope glycoprotein</fullName>
    </recommendedName>
    <alternativeName>
        <fullName>Env polyprotein</fullName>
    </alternativeName>
    <component>
        <recommendedName>
            <fullName>Surface protein</fullName>
            <shortName>SU</shortName>
        </recommendedName>
        <alternativeName>
            <fullName>Glycoprotein 76</fullName>
            <shortName>gp76</shortName>
        </alternativeName>
    </component>
    <component>
        <recommendedName>
            <fullName>Transmembrane protein</fullName>
            <shortName>TM</shortName>
        </recommendedName>
        <alternativeName>
            <fullName>Envelope protein p15E</fullName>
        </alternativeName>
    </component>
    <component>
        <recommendedName>
            <fullName>R-peptide</fullName>
        </recommendedName>
        <alternativeName>
            <fullName>p2E</fullName>
        </alternativeName>
    </component>
</protein>
<gene>
    <name type="primary">env</name>
</gene>